<dbReference type="EC" id="2.1.1.-" evidence="5"/>
<dbReference type="EMBL" id="ACJE01000004">
    <property type="protein sequence ID" value="EHA27207.1"/>
    <property type="molecule type" value="Genomic_DNA"/>
</dbReference>
<dbReference type="SMR" id="G3XSI6"/>
<dbReference type="VEuPathDB" id="FungiDB:ASPNIDRAFT2_124971"/>
<dbReference type="HOGENOM" id="CLU_064550_0_0_1"/>
<dbReference type="OrthoDB" id="106045at5052"/>
<dbReference type="Proteomes" id="UP000009038">
    <property type="component" value="Unassembled WGS sequence"/>
</dbReference>
<dbReference type="GO" id="GO:0008171">
    <property type="term" value="F:O-methyltransferase activity"/>
    <property type="evidence" value="ECO:0007669"/>
    <property type="project" value="InterPro"/>
</dbReference>
<dbReference type="GO" id="GO:0032259">
    <property type="term" value="P:methylation"/>
    <property type="evidence" value="ECO:0007669"/>
    <property type="project" value="UniProtKB-KW"/>
</dbReference>
<dbReference type="GO" id="GO:0044550">
    <property type="term" value="P:secondary metabolite biosynthetic process"/>
    <property type="evidence" value="ECO:0007669"/>
    <property type="project" value="UniProtKB-ARBA"/>
</dbReference>
<dbReference type="Gene3D" id="3.40.50.150">
    <property type="entry name" value="Vaccinia Virus protein VP39"/>
    <property type="match status" value="1"/>
</dbReference>
<dbReference type="InterPro" id="IPR016461">
    <property type="entry name" value="COMT-like"/>
</dbReference>
<dbReference type="InterPro" id="IPR001077">
    <property type="entry name" value="O_MeTrfase_dom"/>
</dbReference>
<dbReference type="InterPro" id="IPR029063">
    <property type="entry name" value="SAM-dependent_MTases_sf"/>
</dbReference>
<dbReference type="PANTHER" id="PTHR43712:SF18">
    <property type="entry name" value="PUTATIVE (AFU_ORTHOLOGUE AFUA_4G14240)-RELATED"/>
    <property type="match status" value="1"/>
</dbReference>
<dbReference type="PANTHER" id="PTHR43712">
    <property type="entry name" value="PUTATIVE (AFU_ORTHOLOGUE AFUA_4G14580)-RELATED"/>
    <property type="match status" value="1"/>
</dbReference>
<dbReference type="Pfam" id="PF00891">
    <property type="entry name" value="Methyltransf_2"/>
    <property type="match status" value="1"/>
</dbReference>
<dbReference type="SUPFAM" id="SSF53335">
    <property type="entry name" value="S-adenosyl-L-methionine-dependent methyltransferases"/>
    <property type="match status" value="1"/>
</dbReference>
<dbReference type="PROSITE" id="PS51683">
    <property type="entry name" value="SAM_OMT_II"/>
    <property type="match status" value="1"/>
</dbReference>
<reference key="1">
    <citation type="journal article" date="2011" name="Genome Res.">
        <title>Comparative genomics of citric-acid-producing Aspergillus niger ATCC 1015 versus enzyme-producing CBS 513.88.</title>
        <authorList>
            <person name="Andersen M.R."/>
            <person name="Salazar M.P."/>
            <person name="Schaap P.J."/>
            <person name="van de Vondervoort P.J.I."/>
            <person name="Culley D."/>
            <person name="Thykaer J."/>
            <person name="Frisvad J.C."/>
            <person name="Nielsen K.F."/>
            <person name="Albang R."/>
            <person name="Albermann K."/>
            <person name="Berka R.M."/>
            <person name="Braus G.H."/>
            <person name="Braus-Stromeyer S.A."/>
            <person name="Corrochano L.M."/>
            <person name="Dai Z."/>
            <person name="van Dijck P.W.M."/>
            <person name="Hofmann G."/>
            <person name="Lasure L.L."/>
            <person name="Magnuson J.K."/>
            <person name="Menke H."/>
            <person name="Meijer M."/>
            <person name="Meijer S.L."/>
            <person name="Nielsen J.B."/>
            <person name="Nielsen M.L."/>
            <person name="van Ooyen A.J.J."/>
            <person name="Pel H.J."/>
            <person name="Poulsen L."/>
            <person name="Samson R.A."/>
            <person name="Stam H."/>
            <person name="Tsang A."/>
            <person name="van den Brink J.M."/>
            <person name="Atkins A."/>
            <person name="Aerts A."/>
            <person name="Shapiro H."/>
            <person name="Pangilinan J."/>
            <person name="Salamov A."/>
            <person name="Lou Y."/>
            <person name="Lindquist E."/>
            <person name="Lucas S."/>
            <person name="Grimwood J."/>
            <person name="Grigoriev I.V."/>
            <person name="Kubicek C.P."/>
            <person name="Martinez D."/>
            <person name="van Peij N.N.M.E."/>
            <person name="Roubos J.A."/>
            <person name="Nielsen J."/>
            <person name="Baker S.E."/>
        </authorList>
    </citation>
    <scope>NUCLEOTIDE SEQUENCE [LARGE SCALE GENOMIC DNA]</scope>
    <source>
        <strain>ATCC 1015 / CBS 113.46 / FGSC A1144 / LSHB Ac4 / NCTC 3858a / NRRL 328 / USDA 3528.7</strain>
    </source>
</reference>
<reference key="2">
    <citation type="journal article" date="2019" name="Biochemistry">
        <title>Biaryl-forming enzymes from Aspergilli exhibit substrate-dependent stereoselectivity.</title>
        <authorList>
            <person name="Obermaier S."/>
            <person name="Mueller M."/>
        </authorList>
    </citation>
    <scope>FUNCTION</scope>
    <scope>PATHWAY</scope>
</reference>
<organism>
    <name type="scientific">Aspergillus niger (strain ATCC 1015 / CBS 113.46 / FGSC A1144 / LSHB Ac4 / NCTC 3858a / NRRL 328 / USDA 3528.7)</name>
    <dbReference type="NCBI Taxonomy" id="380704"/>
    <lineage>
        <taxon>Eukaryota</taxon>
        <taxon>Fungi</taxon>
        <taxon>Dikarya</taxon>
        <taxon>Ascomycota</taxon>
        <taxon>Pezizomycotina</taxon>
        <taxon>Eurotiomycetes</taxon>
        <taxon>Eurotiomycetidae</taxon>
        <taxon>Eurotiales</taxon>
        <taxon>Aspergillaceae</taxon>
        <taxon>Aspergillus</taxon>
        <taxon>Aspergillus subgen. Circumdati</taxon>
    </lineage>
</organism>
<sequence length="347" mass="38727">APALGFVPIAVHFDLFGCLQEIGKPATAQDVCISITFLHKKSMFAKVNRSSDDTLFLMGGLGFLDLLPDDVYQANAVTRFLVDTPSAQHGAMHFTSEGLLASAFLMRRLMDTKFEYPFQECDTPFQYAHKLMGNEHLAREHVYSVMHETGRLDSFNTFMTGKFGRWGTMPDRVRKLGYDLDGLLQSTAPERIRVVDIGGGRGELLLEMQATYPHLLKKENLILQEYNADIGVVPEVTEMGWNYKEDASEQPVKGALLYSMAHVLHNLSDIESIKLLTKVARVMAPSSRLLIQEFTKNAASSTTHAAMILMHAGRERTSAEWRDLAAFAGLEITFEAYPPNGECVVEM</sequence>
<name>AUNE_ASPNA</name>
<protein>
    <recommendedName>
        <fullName evidence="3">O-methyltransferase aunE</fullName>
        <ecNumber evidence="5">2.1.1.-</ecNumber>
    </recommendedName>
    <alternativeName>
        <fullName evidence="3">Aurasperone B biosynthesis cluster protein E</fullName>
    </alternativeName>
</protein>
<evidence type="ECO:0000255" key="1">
    <source>
        <dbReference type="PROSITE-ProRule" id="PRU01020"/>
    </source>
</evidence>
<evidence type="ECO:0000269" key="2">
    <source>
    </source>
</evidence>
<evidence type="ECO:0000303" key="3">
    <source>
    </source>
</evidence>
<evidence type="ECO:0000305" key="4"/>
<evidence type="ECO:0000305" key="5">
    <source>
    </source>
</evidence>
<evidence type="ECO:0000312" key="6">
    <source>
        <dbReference type="EMBL" id="EHA27207.1"/>
    </source>
</evidence>
<comment type="function">
    <text evidence="2 5">O-methyltransferase; part of the gene cluster that mediates the biosynthesis of aurasperone B, a dimeric gamma-naphthopyrone (PubMed:31067027). The first step in the biosynthesis of aurasperone B is the production of gamma-naphthopyrone precursor YWA1 by the non-reducing polyketide synthase albA, via condensation of one acetyl-CoA starter unit with 6 malonyl-CoA units (PubMed:31067027). YWA1 is then methylated by aunE at position C-6 to yield foncesin which is further methylated at position C-8 by aunD to produce fonsecin B (Probable). A key enzyme in the biosynthetic pathway is the cytochrome P450 monooxygenase aunB which catalyzes the oxidative dimerization of fonsecin B to aurasperone B (PubMed:31067027). AunB also catalyzes the oxidative dimerization of rubrofusarin B into aurasperone A (PubMed:31067027).</text>
</comment>
<comment type="pathway">
    <text evidence="5">Secondary metabolite biosynthesis.</text>
</comment>
<comment type="similarity">
    <text evidence="1">Belongs to the class I-like SAM-binding methyltransferase superfamily. Cation-independent O-methyltransferase family.</text>
</comment>
<comment type="caution">
    <text evidence="4">The sequence misses the N-terminal part. The correct gene model with the complete protein sequence could not be recovered from the submitted genomic sequence.</text>
</comment>
<keyword id="KW-0489">Methyltransferase</keyword>
<keyword id="KW-0949">S-adenosyl-L-methionine</keyword>
<keyword id="KW-0808">Transferase</keyword>
<proteinExistence type="inferred from homology"/>
<accession>G3XSI6</accession>
<feature type="chain" id="PRO_0000449891" description="O-methyltransferase aunE">
    <location>
        <begin position="1" status="less than"/>
        <end position="347"/>
    </location>
</feature>
<feature type="active site" description="Proton acceptor" evidence="1">
    <location>
        <position position="265"/>
    </location>
</feature>
<feature type="binding site" evidence="1">
    <location>
        <position position="166"/>
    </location>
    <ligand>
        <name>S-adenosyl-L-methionine</name>
        <dbReference type="ChEBI" id="CHEBI:59789"/>
    </ligand>
</feature>
<feature type="non-terminal residue" evidence="6">
    <location>
        <position position="1"/>
    </location>
</feature>
<gene>
    <name evidence="3" type="primary">aunE</name>
    <name type="ORF">ASPNIDRAFT_124971</name>
</gene>